<organism>
    <name type="scientific">Mycobacterium leprae (strain TN)</name>
    <dbReference type="NCBI Taxonomy" id="272631"/>
    <lineage>
        <taxon>Bacteria</taxon>
        <taxon>Bacillati</taxon>
        <taxon>Actinomycetota</taxon>
        <taxon>Actinomycetes</taxon>
        <taxon>Mycobacteriales</taxon>
        <taxon>Mycobacteriaceae</taxon>
        <taxon>Mycobacterium</taxon>
    </lineage>
</organism>
<evidence type="ECO:0000250" key="1"/>
<evidence type="ECO:0000255" key="2">
    <source>
        <dbReference type="PROSITE-ProRule" id="PRU01395"/>
    </source>
</evidence>
<evidence type="ECO:0000305" key="3"/>
<comment type="function">
    <text evidence="1">Does not seem to be involved in pupylation or substrate degradation.</text>
</comment>
<comment type="subunit">
    <text evidence="1">Interacts with PafB; with which it probably forms a heterocomplex.</text>
</comment>
<comment type="similarity">
    <text evidence="3">Belongs to the PafC family.</text>
</comment>
<comment type="sequence caution" evidence="3">
    <conflict type="frameshift">
        <sequence resource="EMBL-CDS" id="AAA17199"/>
    </conflict>
</comment>
<protein>
    <recommendedName>
        <fullName>Protein PafC</fullName>
    </recommendedName>
</protein>
<name>PAFC_MYCLE</name>
<keyword id="KW-1185">Reference proteome</keyword>
<proteinExistence type="inferred from homology"/>
<reference key="1">
    <citation type="submission" date="1994-03" db="EMBL/GenBank/DDBJ databases">
        <authorList>
            <person name="Smith D.R."/>
            <person name="Robison K."/>
        </authorList>
    </citation>
    <scope>NUCLEOTIDE SEQUENCE [GENOMIC DNA]</scope>
</reference>
<reference key="2">
    <citation type="journal article" date="2001" name="Nature">
        <title>Massive gene decay in the leprosy bacillus.</title>
        <authorList>
            <person name="Cole S.T."/>
            <person name="Eiglmeier K."/>
            <person name="Parkhill J."/>
            <person name="James K.D."/>
            <person name="Thomson N.R."/>
            <person name="Wheeler P.R."/>
            <person name="Honore N."/>
            <person name="Garnier T."/>
            <person name="Churcher C.M."/>
            <person name="Harris D.E."/>
            <person name="Mungall K.L."/>
            <person name="Basham D."/>
            <person name="Brown D."/>
            <person name="Chillingworth T."/>
            <person name="Connor R."/>
            <person name="Davies R.M."/>
            <person name="Devlin K."/>
            <person name="Duthoy S."/>
            <person name="Feltwell T."/>
            <person name="Fraser A."/>
            <person name="Hamlin N."/>
            <person name="Holroyd S."/>
            <person name="Hornsby T."/>
            <person name="Jagels K."/>
            <person name="Lacroix C."/>
            <person name="Maclean J."/>
            <person name="Moule S."/>
            <person name="Murphy L.D."/>
            <person name="Oliver K."/>
            <person name="Quail M.A."/>
            <person name="Rajandream M.A."/>
            <person name="Rutherford K.M."/>
            <person name="Rutter S."/>
            <person name="Seeger K."/>
            <person name="Simon S."/>
            <person name="Simmonds M."/>
            <person name="Skelton J."/>
            <person name="Squares R."/>
            <person name="Squares S."/>
            <person name="Stevens K."/>
            <person name="Taylor K."/>
            <person name="Whitehead S."/>
            <person name="Woodward J.R."/>
            <person name="Barrell B.G."/>
        </authorList>
    </citation>
    <scope>NUCLEOTIDE SEQUENCE [LARGE SCALE GENOMIC DNA]</scope>
    <source>
        <strain>TN</strain>
    </source>
</reference>
<feature type="chain" id="PRO_0000014123" description="Protein PafC">
    <location>
        <begin position="1"/>
        <end position="324"/>
    </location>
</feature>
<feature type="domain" description="WYL" evidence="2">
    <location>
        <begin position="139"/>
        <end position="219"/>
    </location>
</feature>
<feature type="sequence conflict" description="In Ref. 1; AAA17199." evidence="3" ref="1">
    <original>D</original>
    <variation>N</variation>
    <location>
        <position position="156"/>
    </location>
</feature>
<gene>
    <name type="primary">pafC</name>
    <name type="ordered locus">ML1330</name>
    <name type="ORF">B2126_C2_220</name>
    <name type="ORF">MLCB2533.26</name>
</gene>
<sequence>MTQLSTRLVRLLNMVPYFQANPRITRAEAAADLGVSAKQLDQDFNQLWVCGLPGYGPGDLIDFEFSGDTIEVTFSAGIDRPLQLTSPEAIGLLVALRALANIPGVVDPEAVRSAIAKIEAAAVVMGNEATGSVASVDTRPFSESHAVAAVRAAVRDKQALVIDYYSASHDTLTSRIVDPIRVLLVGDHSYLEAWSREAEGVRLFRFDRIVVARELDEPAAAPETVRKALPDTSFFDDDPLLPSATLWVARSVSWIFEYYPMRQAHELPDGSFQAVMTYASDAWMTRLVLGFGSAVQVQAPEALAYRVRNAAVAALESYQVTAQA</sequence>
<dbReference type="EMBL" id="U00017">
    <property type="protein sequence ID" value="AAA17199.1"/>
    <property type="status" value="ALT_FRAME"/>
    <property type="molecule type" value="Genomic_DNA"/>
</dbReference>
<dbReference type="EMBL" id="AL035310">
    <property type="protein sequence ID" value="CAA22940.1"/>
    <property type="molecule type" value="Genomic_DNA"/>
</dbReference>
<dbReference type="EMBL" id="AL583921">
    <property type="protein sequence ID" value="CAC31711.1"/>
    <property type="molecule type" value="Genomic_DNA"/>
</dbReference>
<dbReference type="PIR" id="D87075">
    <property type="entry name" value="D87075"/>
</dbReference>
<dbReference type="PIR" id="S72859">
    <property type="entry name" value="S72859"/>
</dbReference>
<dbReference type="RefSeq" id="NP_301954.1">
    <property type="nucleotide sequence ID" value="NC_002677.1"/>
</dbReference>
<dbReference type="RefSeq" id="WP_010908275.1">
    <property type="nucleotide sequence ID" value="NC_002677.1"/>
</dbReference>
<dbReference type="SMR" id="P54075"/>
<dbReference type="STRING" id="272631.gene:17575164"/>
<dbReference type="KEGG" id="mle:ML1330"/>
<dbReference type="PATRIC" id="fig|272631.5.peg.2450"/>
<dbReference type="Leproma" id="ML1330"/>
<dbReference type="eggNOG" id="COG2378">
    <property type="taxonomic scope" value="Bacteria"/>
</dbReference>
<dbReference type="HOGENOM" id="CLU_041141_2_0_11"/>
<dbReference type="OrthoDB" id="5174471at2"/>
<dbReference type="Proteomes" id="UP000000806">
    <property type="component" value="Chromosome"/>
</dbReference>
<dbReference type="InterPro" id="IPR051534">
    <property type="entry name" value="CBASS_pafABC_assoc_protein"/>
</dbReference>
<dbReference type="InterPro" id="IPR028349">
    <property type="entry name" value="PafC"/>
</dbReference>
<dbReference type="InterPro" id="IPR043839">
    <property type="entry name" value="PafC_HTH"/>
</dbReference>
<dbReference type="InterPro" id="IPR026881">
    <property type="entry name" value="WYL_dom"/>
</dbReference>
<dbReference type="PANTHER" id="PTHR34580">
    <property type="match status" value="1"/>
</dbReference>
<dbReference type="PANTHER" id="PTHR34580:SF1">
    <property type="entry name" value="PROTEIN PAFC"/>
    <property type="match status" value="1"/>
</dbReference>
<dbReference type="Pfam" id="PF19187">
    <property type="entry name" value="HTH_PafC"/>
    <property type="match status" value="1"/>
</dbReference>
<dbReference type="Pfam" id="PF13280">
    <property type="entry name" value="WYL"/>
    <property type="match status" value="1"/>
</dbReference>
<dbReference type="PIRSF" id="PIRSF016838">
    <property type="entry name" value="PafC"/>
    <property type="match status" value="1"/>
</dbReference>
<dbReference type="PROSITE" id="PS52050">
    <property type="entry name" value="WYL"/>
    <property type="match status" value="1"/>
</dbReference>
<accession>P54075</accession>
<accession>Q9ZBD9</accession>